<sequence length="107" mass="11894">MTTRRIVTSEKSTLDYDGKGAPEPSNTSPAVPSSVIWKLMSFTFAMITLPIGTYFFTVNWVFQGNATYAGGLAALMANVVLIAYVIMAFRDDQEEMREEAEKSKKKL</sequence>
<protein>
    <recommendedName>
        <fullName evidence="1">Vacuolar ATPase assembly integral membrane protein vma21</fullName>
    </recommendedName>
</protein>
<comment type="function">
    <text evidence="1">Required for the assembly of the V0 complex of the vacuolar ATPase (V-ATPase) in the endoplasmic reticulum.</text>
</comment>
<comment type="subcellular location">
    <subcellularLocation>
        <location evidence="1">Endoplasmic reticulum membrane</location>
        <topology evidence="1">Multi-pass membrane protein</topology>
    </subcellularLocation>
    <subcellularLocation>
        <location evidence="1">Endoplasmic reticulum-Golgi intermediate compartment membrane</location>
        <topology evidence="1">Multi-pass membrane protein</topology>
    </subcellularLocation>
    <subcellularLocation>
        <location evidence="1">Cytoplasmic vesicle</location>
        <location evidence="1">COPII-coated vesicle membrane</location>
        <topology evidence="1">Multi-pass membrane protein</topology>
    </subcellularLocation>
</comment>
<comment type="similarity">
    <text evidence="1">Belongs to the VMA21 family.</text>
</comment>
<name>VMA21_PYRTR</name>
<evidence type="ECO:0000255" key="1">
    <source>
        <dbReference type="HAMAP-Rule" id="MF_03058"/>
    </source>
</evidence>
<evidence type="ECO:0000256" key="2">
    <source>
        <dbReference type="SAM" id="MobiDB-lite"/>
    </source>
</evidence>
<dbReference type="EMBL" id="DS231622">
    <property type="protein sequence ID" value="EDU50916.1"/>
    <property type="molecule type" value="Genomic_DNA"/>
</dbReference>
<dbReference type="RefSeq" id="XP_001938329.1">
    <property type="nucleotide sequence ID" value="XM_001938294.1"/>
</dbReference>
<dbReference type="SMR" id="B2WDD8"/>
<dbReference type="FunCoup" id="B2WDD8">
    <property type="interactions" value="47"/>
</dbReference>
<dbReference type="STRING" id="426418.B2WDD8"/>
<dbReference type="EnsemblFungi" id="EDU50916">
    <property type="protein sequence ID" value="EDU50916"/>
    <property type="gene ID" value="PTRG_07997"/>
</dbReference>
<dbReference type="GeneID" id="6346274"/>
<dbReference type="KEGG" id="ptrr:6346274"/>
<dbReference type="eggNOG" id="ENOG502SBNA">
    <property type="taxonomic scope" value="Eukaryota"/>
</dbReference>
<dbReference type="HOGENOM" id="CLU_154717_1_1_1"/>
<dbReference type="InParanoid" id="B2WDD8"/>
<dbReference type="OMA" id="AMKEDQT"/>
<dbReference type="OrthoDB" id="9603at28556"/>
<dbReference type="Proteomes" id="UP000001471">
    <property type="component" value="Unassembled WGS sequence"/>
</dbReference>
<dbReference type="GO" id="GO:0005789">
    <property type="term" value="C:endoplasmic reticulum membrane"/>
    <property type="evidence" value="ECO:0007669"/>
    <property type="project" value="UniProtKB-SubCell"/>
</dbReference>
<dbReference type="GO" id="GO:0033116">
    <property type="term" value="C:endoplasmic reticulum-Golgi intermediate compartment membrane"/>
    <property type="evidence" value="ECO:0007669"/>
    <property type="project" value="UniProtKB-SubCell"/>
</dbReference>
<dbReference type="GO" id="GO:0012507">
    <property type="term" value="C:ER to Golgi transport vesicle membrane"/>
    <property type="evidence" value="ECO:0007669"/>
    <property type="project" value="UniProtKB-SubCell"/>
</dbReference>
<dbReference type="GO" id="GO:0070072">
    <property type="term" value="P:vacuolar proton-transporting V-type ATPase complex assembly"/>
    <property type="evidence" value="ECO:0007669"/>
    <property type="project" value="UniProtKB-UniRule"/>
</dbReference>
<dbReference type="HAMAP" id="MF_03058">
    <property type="entry name" value="VMA21"/>
    <property type="match status" value="1"/>
</dbReference>
<dbReference type="InterPro" id="IPR019013">
    <property type="entry name" value="Vma21"/>
</dbReference>
<dbReference type="PANTHER" id="PTHR31792">
    <property type="entry name" value="VACUOLAR ATPASE ASSEMBLY INTEGRAL MEMBRANE PROTEIN VMA21"/>
    <property type="match status" value="1"/>
</dbReference>
<dbReference type="PANTHER" id="PTHR31792:SF3">
    <property type="entry name" value="VACUOLAR ATPASE ASSEMBLY INTEGRAL MEMBRANE PROTEIN VMA21"/>
    <property type="match status" value="1"/>
</dbReference>
<dbReference type="Pfam" id="PF09446">
    <property type="entry name" value="VMA21"/>
    <property type="match status" value="1"/>
</dbReference>
<proteinExistence type="inferred from homology"/>
<feature type="chain" id="PRO_0000377596" description="Vacuolar ATPase assembly integral membrane protein vma21">
    <location>
        <begin position="1"/>
        <end position="107"/>
    </location>
</feature>
<feature type="topological domain" description="Cytoplasmic" evidence="1">
    <location>
        <begin position="1"/>
        <end position="41"/>
    </location>
</feature>
<feature type="transmembrane region" description="Helical" evidence="1">
    <location>
        <begin position="42"/>
        <end position="62"/>
    </location>
</feature>
<feature type="topological domain" description="Lumenal" evidence="1">
    <location>
        <begin position="63"/>
        <end position="68"/>
    </location>
</feature>
<feature type="transmembrane region" description="Helical" evidence="1">
    <location>
        <begin position="69"/>
        <end position="89"/>
    </location>
</feature>
<feature type="topological domain" description="Cytoplasmic" evidence="1">
    <location>
        <begin position="90"/>
        <end position="107"/>
    </location>
</feature>
<feature type="region of interest" description="Disordered" evidence="2">
    <location>
        <begin position="1"/>
        <end position="30"/>
    </location>
</feature>
<feature type="short sequence motif" description="Prevents secretion from ER">
    <location>
        <begin position="104"/>
        <end position="107"/>
    </location>
</feature>
<feature type="compositionally biased region" description="Polar residues" evidence="2">
    <location>
        <begin position="1"/>
        <end position="11"/>
    </location>
</feature>
<organism>
    <name type="scientific">Pyrenophora tritici-repentis (strain Pt-1C-BFP)</name>
    <name type="common">Wheat tan spot fungus</name>
    <name type="synonym">Drechslera tritici-repentis</name>
    <dbReference type="NCBI Taxonomy" id="426418"/>
    <lineage>
        <taxon>Eukaryota</taxon>
        <taxon>Fungi</taxon>
        <taxon>Dikarya</taxon>
        <taxon>Ascomycota</taxon>
        <taxon>Pezizomycotina</taxon>
        <taxon>Dothideomycetes</taxon>
        <taxon>Pleosporomycetidae</taxon>
        <taxon>Pleosporales</taxon>
        <taxon>Pleosporineae</taxon>
        <taxon>Pleosporaceae</taxon>
        <taxon>Pyrenophora</taxon>
    </lineage>
</organism>
<accession>B2WDD8</accession>
<gene>
    <name type="primary">vma21</name>
    <name type="ORF">PTRG_07997</name>
</gene>
<keyword id="KW-0968">Cytoplasmic vesicle</keyword>
<keyword id="KW-0256">Endoplasmic reticulum</keyword>
<keyword id="KW-0472">Membrane</keyword>
<keyword id="KW-1185">Reference proteome</keyword>
<keyword id="KW-0812">Transmembrane</keyword>
<keyword id="KW-1133">Transmembrane helix</keyword>
<reference key="1">
    <citation type="journal article" date="2013" name="G3 (Bethesda)">
        <title>Comparative genomics of a plant-pathogenic fungus, Pyrenophora tritici-repentis, reveals transduplication and the impact of repeat elements on pathogenicity and population divergence.</title>
        <authorList>
            <person name="Manning V.A."/>
            <person name="Pandelova I."/>
            <person name="Dhillon B."/>
            <person name="Wilhelm L.J."/>
            <person name="Goodwin S.B."/>
            <person name="Berlin A.M."/>
            <person name="Figueroa M."/>
            <person name="Freitag M."/>
            <person name="Hane J.K."/>
            <person name="Henrissat B."/>
            <person name="Holman W.H."/>
            <person name="Kodira C.D."/>
            <person name="Martin J."/>
            <person name="Oliver R.P."/>
            <person name="Robbertse B."/>
            <person name="Schackwitz W."/>
            <person name="Schwartz D.C."/>
            <person name="Spatafora J.W."/>
            <person name="Turgeon B.G."/>
            <person name="Yandava C."/>
            <person name="Young S."/>
            <person name="Zhou S."/>
            <person name="Zeng Q."/>
            <person name="Grigoriev I.V."/>
            <person name="Ma L.-J."/>
            <person name="Ciuffetti L.M."/>
        </authorList>
    </citation>
    <scope>NUCLEOTIDE SEQUENCE [LARGE SCALE GENOMIC DNA]</scope>
    <source>
        <strain>Pt-1C-BFP</strain>
    </source>
</reference>